<dbReference type="EMBL" id="CP001252">
    <property type="protein sequence ID" value="ACK44975.1"/>
    <property type="molecule type" value="Genomic_DNA"/>
</dbReference>
<dbReference type="RefSeq" id="WP_012586614.1">
    <property type="nucleotide sequence ID" value="NC_011663.1"/>
</dbReference>
<dbReference type="SMR" id="B8E6B2"/>
<dbReference type="KEGG" id="sbp:Sbal223_0441"/>
<dbReference type="HOGENOM" id="CLU_086034_1_0_6"/>
<dbReference type="Proteomes" id="UP000002507">
    <property type="component" value="Chromosome"/>
</dbReference>
<dbReference type="GO" id="GO:0033281">
    <property type="term" value="C:TAT protein transport complex"/>
    <property type="evidence" value="ECO:0007669"/>
    <property type="project" value="UniProtKB-UniRule"/>
</dbReference>
<dbReference type="GO" id="GO:0008320">
    <property type="term" value="F:protein transmembrane transporter activity"/>
    <property type="evidence" value="ECO:0007669"/>
    <property type="project" value="UniProtKB-UniRule"/>
</dbReference>
<dbReference type="GO" id="GO:0043953">
    <property type="term" value="P:protein transport by the Tat complex"/>
    <property type="evidence" value="ECO:0007669"/>
    <property type="project" value="UniProtKB-UniRule"/>
</dbReference>
<dbReference type="Gene3D" id="1.20.5.3310">
    <property type="match status" value="1"/>
</dbReference>
<dbReference type="HAMAP" id="MF_00237">
    <property type="entry name" value="TatB"/>
    <property type="match status" value="1"/>
</dbReference>
<dbReference type="InterPro" id="IPR003369">
    <property type="entry name" value="TatA/B/E"/>
</dbReference>
<dbReference type="InterPro" id="IPR018448">
    <property type="entry name" value="TatB"/>
</dbReference>
<dbReference type="NCBIfam" id="TIGR01410">
    <property type="entry name" value="tatB"/>
    <property type="match status" value="1"/>
</dbReference>
<dbReference type="PANTHER" id="PTHR33162">
    <property type="entry name" value="SEC-INDEPENDENT PROTEIN TRANSLOCASE PROTEIN TATA, CHLOROPLASTIC"/>
    <property type="match status" value="1"/>
</dbReference>
<dbReference type="PANTHER" id="PTHR33162:SF1">
    <property type="entry name" value="SEC-INDEPENDENT PROTEIN TRANSLOCASE PROTEIN TATA, CHLOROPLASTIC"/>
    <property type="match status" value="1"/>
</dbReference>
<dbReference type="Pfam" id="PF02416">
    <property type="entry name" value="TatA_B_E"/>
    <property type="match status" value="1"/>
</dbReference>
<dbReference type="PRINTS" id="PR01506">
    <property type="entry name" value="TATBPROTEIN"/>
</dbReference>
<protein>
    <recommendedName>
        <fullName evidence="1">Sec-independent protein translocase protein TatB</fullName>
    </recommendedName>
</protein>
<proteinExistence type="inferred from homology"/>
<organism>
    <name type="scientific">Shewanella baltica (strain OS223)</name>
    <dbReference type="NCBI Taxonomy" id="407976"/>
    <lineage>
        <taxon>Bacteria</taxon>
        <taxon>Pseudomonadati</taxon>
        <taxon>Pseudomonadota</taxon>
        <taxon>Gammaproteobacteria</taxon>
        <taxon>Alteromonadales</taxon>
        <taxon>Shewanellaceae</taxon>
        <taxon>Shewanella</taxon>
    </lineage>
</organism>
<feature type="chain" id="PRO_1000196662" description="Sec-independent protein translocase protein TatB">
    <location>
        <begin position="1"/>
        <end position="166"/>
    </location>
</feature>
<feature type="transmembrane region" description="Helical" evidence="1">
    <location>
        <begin position="2"/>
        <end position="22"/>
    </location>
</feature>
<feature type="region of interest" description="Disordered" evidence="2">
    <location>
        <begin position="69"/>
        <end position="166"/>
    </location>
</feature>
<feature type="compositionally biased region" description="Polar residues" evidence="2">
    <location>
        <begin position="88"/>
        <end position="97"/>
    </location>
</feature>
<feature type="compositionally biased region" description="Polar residues" evidence="2">
    <location>
        <begin position="112"/>
        <end position="132"/>
    </location>
</feature>
<feature type="compositionally biased region" description="Low complexity" evidence="2">
    <location>
        <begin position="133"/>
        <end position="153"/>
    </location>
</feature>
<feature type="compositionally biased region" description="Polar residues" evidence="2">
    <location>
        <begin position="155"/>
        <end position="166"/>
    </location>
</feature>
<accession>B8E6B2</accession>
<sequence>MFDGIGFMELLLIGVLGLVVLGPERLPVAVRSITSWIRAMKRMANSVKEELEQELKIEQLHADLKKAESKGLSNLSPELKESIEQLKQAAQSVNRPYQVQDPVKDTPAPENQIHSPVASTVQTSPAQASQANPTATVEASPTSASPATPSEPSQGADTRSNPKANG</sequence>
<keyword id="KW-0997">Cell inner membrane</keyword>
<keyword id="KW-1003">Cell membrane</keyword>
<keyword id="KW-0472">Membrane</keyword>
<keyword id="KW-0653">Protein transport</keyword>
<keyword id="KW-0811">Translocation</keyword>
<keyword id="KW-0812">Transmembrane</keyword>
<keyword id="KW-1133">Transmembrane helix</keyword>
<keyword id="KW-0813">Transport</keyword>
<comment type="function">
    <text evidence="1">Part of the twin-arginine translocation (Tat) system that transports large folded proteins containing a characteristic twin-arginine motif in their signal peptide across membranes. Together with TatC, TatB is part of a receptor directly interacting with Tat signal peptides. TatB may form an oligomeric binding site that transiently accommodates folded Tat precursor proteins before their translocation.</text>
</comment>
<comment type="subunit">
    <text evidence="1">The Tat system comprises two distinct complexes: a TatABC complex, containing multiple copies of TatA, TatB and TatC subunits, and a separate TatA complex, containing only TatA subunits. Substrates initially bind to the TatABC complex, which probably triggers association of the separate TatA complex to form the active translocon.</text>
</comment>
<comment type="subcellular location">
    <subcellularLocation>
        <location evidence="1">Cell inner membrane</location>
        <topology evidence="1">Single-pass membrane protein</topology>
    </subcellularLocation>
</comment>
<comment type="similarity">
    <text evidence="1">Belongs to the TatB family.</text>
</comment>
<name>TATB_SHEB2</name>
<gene>
    <name evidence="1" type="primary">tatB</name>
    <name type="ordered locus">Sbal223_0441</name>
</gene>
<reference key="1">
    <citation type="submission" date="2008-12" db="EMBL/GenBank/DDBJ databases">
        <title>Complete sequence of chromosome of Shewanella baltica OS223.</title>
        <authorList>
            <consortium name="US DOE Joint Genome Institute"/>
            <person name="Lucas S."/>
            <person name="Copeland A."/>
            <person name="Lapidus A."/>
            <person name="Glavina del Rio T."/>
            <person name="Dalin E."/>
            <person name="Tice H."/>
            <person name="Bruce D."/>
            <person name="Goodwin L."/>
            <person name="Pitluck S."/>
            <person name="Chertkov O."/>
            <person name="Meincke L."/>
            <person name="Brettin T."/>
            <person name="Detter J.C."/>
            <person name="Han C."/>
            <person name="Kuske C.R."/>
            <person name="Larimer F."/>
            <person name="Land M."/>
            <person name="Hauser L."/>
            <person name="Kyrpides N."/>
            <person name="Ovchinnikova G."/>
            <person name="Brettar I."/>
            <person name="Rodrigues J."/>
            <person name="Konstantinidis K."/>
            <person name="Tiedje J."/>
        </authorList>
    </citation>
    <scope>NUCLEOTIDE SEQUENCE [LARGE SCALE GENOMIC DNA]</scope>
    <source>
        <strain>OS223</strain>
    </source>
</reference>
<evidence type="ECO:0000255" key="1">
    <source>
        <dbReference type="HAMAP-Rule" id="MF_00237"/>
    </source>
</evidence>
<evidence type="ECO:0000256" key="2">
    <source>
        <dbReference type="SAM" id="MobiDB-lite"/>
    </source>
</evidence>